<name>AATD_METAC</name>
<gene>
    <name evidence="1" type="primary">atpD</name>
    <name type="ordered locus">MA_4160</name>
</gene>
<keyword id="KW-0066">ATP synthesis</keyword>
<keyword id="KW-1003">Cell membrane</keyword>
<keyword id="KW-0375">Hydrogen ion transport</keyword>
<keyword id="KW-0406">Ion transport</keyword>
<keyword id="KW-0472">Membrane</keyword>
<keyword id="KW-1185">Reference proteome</keyword>
<keyword id="KW-0813">Transport</keyword>
<accession>Q8TII9</accession>
<sequence>MAQQDVKPTRSELINLKKKIKLSESGHKLLKMKRDGLILEFFKILNEARNVRTELDAAYEKSTEKINLASAVNGMVAVKSTAFTAKEYPEIQLSGHNIMGVVVPKISSTGVRKPLYERGYGIIGTNSYIDETADAYEELVEKIIAAAELETTMKRLLDEIEKTKRRVNALEFKVIPELIATMKYIRFMLEEMERENTFRLKRVKARMKN</sequence>
<protein>
    <recommendedName>
        <fullName evidence="1">A-type ATP synthase subunit D</fullName>
    </recommendedName>
</protein>
<reference key="1">
    <citation type="journal article" date="2002" name="Genome Res.">
        <title>The genome of Methanosarcina acetivorans reveals extensive metabolic and physiological diversity.</title>
        <authorList>
            <person name="Galagan J.E."/>
            <person name="Nusbaum C."/>
            <person name="Roy A."/>
            <person name="Endrizzi M.G."/>
            <person name="Macdonald P."/>
            <person name="FitzHugh W."/>
            <person name="Calvo S."/>
            <person name="Engels R."/>
            <person name="Smirnov S."/>
            <person name="Atnoor D."/>
            <person name="Brown A."/>
            <person name="Allen N."/>
            <person name="Naylor J."/>
            <person name="Stange-Thomann N."/>
            <person name="DeArellano K."/>
            <person name="Johnson R."/>
            <person name="Linton L."/>
            <person name="McEwan P."/>
            <person name="McKernan K."/>
            <person name="Talamas J."/>
            <person name="Tirrell A."/>
            <person name="Ye W."/>
            <person name="Zimmer A."/>
            <person name="Barber R.D."/>
            <person name="Cann I."/>
            <person name="Graham D.E."/>
            <person name="Grahame D.A."/>
            <person name="Guss A.M."/>
            <person name="Hedderich R."/>
            <person name="Ingram-Smith C."/>
            <person name="Kuettner H.C."/>
            <person name="Krzycki J.A."/>
            <person name="Leigh J.A."/>
            <person name="Li W."/>
            <person name="Liu J."/>
            <person name="Mukhopadhyay B."/>
            <person name="Reeve J.N."/>
            <person name="Smith K."/>
            <person name="Springer T.A."/>
            <person name="Umayam L.A."/>
            <person name="White O."/>
            <person name="White R.H."/>
            <person name="de Macario E.C."/>
            <person name="Ferry J.G."/>
            <person name="Jarrell K.F."/>
            <person name="Jing H."/>
            <person name="Macario A.J.L."/>
            <person name="Paulsen I.T."/>
            <person name="Pritchett M."/>
            <person name="Sowers K.R."/>
            <person name="Swanson R.V."/>
            <person name="Zinder S.H."/>
            <person name="Lander E."/>
            <person name="Metcalf W.W."/>
            <person name="Birren B."/>
        </authorList>
    </citation>
    <scope>NUCLEOTIDE SEQUENCE [LARGE SCALE GENOMIC DNA]</scope>
    <source>
        <strain>ATCC 35395 / DSM 2834 / JCM 12185 / C2A</strain>
    </source>
</reference>
<feature type="chain" id="PRO_0000144249" description="A-type ATP synthase subunit D">
    <location>
        <begin position="1"/>
        <end position="209"/>
    </location>
</feature>
<evidence type="ECO:0000255" key="1">
    <source>
        <dbReference type="HAMAP-Rule" id="MF_00271"/>
    </source>
</evidence>
<comment type="function">
    <text evidence="1">Component of the A-type ATP synthase that produces ATP from ADP in the presence of a proton gradient across the membrane.</text>
</comment>
<comment type="subunit">
    <text evidence="1">Has multiple subunits with at least A(3), B(3), C, D, E, F, H, I and proteolipid K(x).</text>
</comment>
<comment type="subcellular location">
    <subcellularLocation>
        <location evidence="1">Cell membrane</location>
        <topology evidence="1">Peripheral membrane protein</topology>
    </subcellularLocation>
</comment>
<comment type="similarity">
    <text evidence="1">Belongs to the V-ATPase D subunit family.</text>
</comment>
<dbReference type="EMBL" id="AE010299">
    <property type="protein sequence ID" value="AAM07508.1"/>
    <property type="molecule type" value="Genomic_DNA"/>
</dbReference>
<dbReference type="RefSeq" id="WP_011024048.1">
    <property type="nucleotide sequence ID" value="NC_003552.1"/>
</dbReference>
<dbReference type="SMR" id="Q8TII9"/>
<dbReference type="FunCoup" id="Q8TII9">
    <property type="interactions" value="110"/>
</dbReference>
<dbReference type="STRING" id="188937.MA_4160"/>
<dbReference type="EnsemblBacteria" id="AAM07508">
    <property type="protein sequence ID" value="AAM07508"/>
    <property type="gene ID" value="MA_4160"/>
</dbReference>
<dbReference type="GeneID" id="1476054"/>
<dbReference type="KEGG" id="mac:MA_4160"/>
<dbReference type="HOGENOM" id="CLU_069688_2_1_2"/>
<dbReference type="InParanoid" id="Q8TII9"/>
<dbReference type="OrthoDB" id="117390at2157"/>
<dbReference type="PhylomeDB" id="Q8TII9"/>
<dbReference type="Proteomes" id="UP000002487">
    <property type="component" value="Chromosome"/>
</dbReference>
<dbReference type="GO" id="GO:0005886">
    <property type="term" value="C:plasma membrane"/>
    <property type="evidence" value="ECO:0007669"/>
    <property type="project" value="UniProtKB-SubCell"/>
</dbReference>
<dbReference type="GO" id="GO:0033176">
    <property type="term" value="C:proton-transporting V-type ATPase complex"/>
    <property type="evidence" value="ECO:0000318"/>
    <property type="project" value="GO_Central"/>
</dbReference>
<dbReference type="GO" id="GO:0005524">
    <property type="term" value="F:ATP binding"/>
    <property type="evidence" value="ECO:0007669"/>
    <property type="project" value="UniProtKB-UniRule"/>
</dbReference>
<dbReference type="GO" id="GO:0046933">
    <property type="term" value="F:proton-transporting ATP synthase activity, rotational mechanism"/>
    <property type="evidence" value="ECO:0007669"/>
    <property type="project" value="UniProtKB-UniRule"/>
</dbReference>
<dbReference type="GO" id="GO:0046961">
    <property type="term" value="F:proton-transporting ATPase activity, rotational mechanism"/>
    <property type="evidence" value="ECO:0007669"/>
    <property type="project" value="InterPro"/>
</dbReference>
<dbReference type="GO" id="GO:0042777">
    <property type="term" value="P:proton motive force-driven plasma membrane ATP synthesis"/>
    <property type="evidence" value="ECO:0007669"/>
    <property type="project" value="UniProtKB-UniRule"/>
</dbReference>
<dbReference type="FunFam" id="1.10.287.3240:FF:000007">
    <property type="entry name" value="V-type ATP synthase subunit D"/>
    <property type="match status" value="1"/>
</dbReference>
<dbReference type="Gene3D" id="1.10.287.3240">
    <property type="match status" value="1"/>
</dbReference>
<dbReference type="HAMAP" id="MF_00271">
    <property type="entry name" value="ATP_synth_D_arch"/>
    <property type="match status" value="1"/>
</dbReference>
<dbReference type="InterPro" id="IPR002699">
    <property type="entry name" value="V_ATPase_D"/>
</dbReference>
<dbReference type="NCBIfam" id="NF001542">
    <property type="entry name" value="PRK00373.1-1"/>
    <property type="match status" value="1"/>
</dbReference>
<dbReference type="NCBIfam" id="NF001545">
    <property type="entry name" value="PRK00373.1-4"/>
    <property type="match status" value="1"/>
</dbReference>
<dbReference type="NCBIfam" id="TIGR00309">
    <property type="entry name" value="V_ATPase_subD"/>
    <property type="match status" value="1"/>
</dbReference>
<dbReference type="PANTHER" id="PTHR11671">
    <property type="entry name" value="V-TYPE ATP SYNTHASE SUBUNIT D"/>
    <property type="match status" value="1"/>
</dbReference>
<dbReference type="Pfam" id="PF01813">
    <property type="entry name" value="ATP-synt_D"/>
    <property type="match status" value="1"/>
</dbReference>
<proteinExistence type="inferred from homology"/>
<organism>
    <name type="scientific">Methanosarcina acetivorans (strain ATCC 35395 / DSM 2834 / JCM 12185 / C2A)</name>
    <dbReference type="NCBI Taxonomy" id="188937"/>
    <lineage>
        <taxon>Archaea</taxon>
        <taxon>Methanobacteriati</taxon>
        <taxon>Methanobacteriota</taxon>
        <taxon>Stenosarchaea group</taxon>
        <taxon>Methanomicrobia</taxon>
        <taxon>Methanosarcinales</taxon>
        <taxon>Methanosarcinaceae</taxon>
        <taxon>Methanosarcina</taxon>
    </lineage>
</organism>